<accession>Q5XJA0</accession>
<accession>A0SKZ8</accession>
<accession>A4FUK7</accession>
<accession>Q1LU95</accession>
<accession>Q1LWU3</accession>
<accession>Q4V912</accession>
<reference key="1">
    <citation type="journal article" date="2007" name="Development">
        <title>Ttrap is an essential modulator of Smad3-dependent Nodal signaling during zebrafish gastrulation and left-right axis determination.</title>
        <authorList>
            <person name="Esguerra C.V."/>
            <person name="Nelles L."/>
            <person name="Vermeire L."/>
            <person name="Ibrahimi A."/>
            <person name="Crawford A.D."/>
            <person name="Derua R."/>
            <person name="Janssens E."/>
            <person name="Waelkens E."/>
            <person name="Carmeliet P."/>
            <person name="Collen D."/>
            <person name="Huylebroeck D."/>
        </authorList>
    </citation>
    <scope>NUCLEOTIDE SEQUENCE [MRNA]</scope>
    <scope>FUNCTION</scope>
    <scope>TISSUE SPECIFICITY</scope>
    <scope>DEVELOPMENTAL STAGE</scope>
    <source>
        <tissue>Embryo</tissue>
    </source>
</reference>
<reference key="2">
    <citation type="journal article" date="2013" name="Nature">
        <title>The zebrafish reference genome sequence and its relationship to the human genome.</title>
        <authorList>
            <person name="Howe K."/>
            <person name="Clark M.D."/>
            <person name="Torroja C.F."/>
            <person name="Torrance J."/>
            <person name="Berthelot C."/>
            <person name="Muffato M."/>
            <person name="Collins J.E."/>
            <person name="Humphray S."/>
            <person name="McLaren K."/>
            <person name="Matthews L."/>
            <person name="McLaren S."/>
            <person name="Sealy I."/>
            <person name="Caccamo M."/>
            <person name="Churcher C."/>
            <person name="Scott C."/>
            <person name="Barrett J.C."/>
            <person name="Koch R."/>
            <person name="Rauch G.J."/>
            <person name="White S."/>
            <person name="Chow W."/>
            <person name="Kilian B."/>
            <person name="Quintais L.T."/>
            <person name="Guerra-Assuncao J.A."/>
            <person name="Zhou Y."/>
            <person name="Gu Y."/>
            <person name="Yen J."/>
            <person name="Vogel J.H."/>
            <person name="Eyre T."/>
            <person name="Redmond S."/>
            <person name="Banerjee R."/>
            <person name="Chi J."/>
            <person name="Fu B."/>
            <person name="Langley E."/>
            <person name="Maguire S.F."/>
            <person name="Laird G.K."/>
            <person name="Lloyd D."/>
            <person name="Kenyon E."/>
            <person name="Donaldson S."/>
            <person name="Sehra H."/>
            <person name="Almeida-King J."/>
            <person name="Loveland J."/>
            <person name="Trevanion S."/>
            <person name="Jones M."/>
            <person name="Quail M."/>
            <person name="Willey D."/>
            <person name="Hunt A."/>
            <person name="Burton J."/>
            <person name="Sims S."/>
            <person name="McLay K."/>
            <person name="Plumb B."/>
            <person name="Davis J."/>
            <person name="Clee C."/>
            <person name="Oliver K."/>
            <person name="Clark R."/>
            <person name="Riddle C."/>
            <person name="Elliot D."/>
            <person name="Threadgold G."/>
            <person name="Harden G."/>
            <person name="Ware D."/>
            <person name="Begum S."/>
            <person name="Mortimore B."/>
            <person name="Kerry G."/>
            <person name="Heath P."/>
            <person name="Phillimore B."/>
            <person name="Tracey A."/>
            <person name="Corby N."/>
            <person name="Dunn M."/>
            <person name="Johnson C."/>
            <person name="Wood J."/>
            <person name="Clark S."/>
            <person name="Pelan S."/>
            <person name="Griffiths G."/>
            <person name="Smith M."/>
            <person name="Glithero R."/>
            <person name="Howden P."/>
            <person name="Barker N."/>
            <person name="Lloyd C."/>
            <person name="Stevens C."/>
            <person name="Harley J."/>
            <person name="Holt K."/>
            <person name="Panagiotidis G."/>
            <person name="Lovell J."/>
            <person name="Beasley H."/>
            <person name="Henderson C."/>
            <person name="Gordon D."/>
            <person name="Auger K."/>
            <person name="Wright D."/>
            <person name="Collins J."/>
            <person name="Raisen C."/>
            <person name="Dyer L."/>
            <person name="Leung K."/>
            <person name="Robertson L."/>
            <person name="Ambridge K."/>
            <person name="Leongamornlert D."/>
            <person name="McGuire S."/>
            <person name="Gilderthorp R."/>
            <person name="Griffiths C."/>
            <person name="Manthravadi D."/>
            <person name="Nichol S."/>
            <person name="Barker G."/>
            <person name="Whitehead S."/>
            <person name="Kay M."/>
            <person name="Brown J."/>
            <person name="Murnane C."/>
            <person name="Gray E."/>
            <person name="Humphries M."/>
            <person name="Sycamore N."/>
            <person name="Barker D."/>
            <person name="Saunders D."/>
            <person name="Wallis J."/>
            <person name="Babbage A."/>
            <person name="Hammond S."/>
            <person name="Mashreghi-Mohammadi M."/>
            <person name="Barr L."/>
            <person name="Martin S."/>
            <person name="Wray P."/>
            <person name="Ellington A."/>
            <person name="Matthews N."/>
            <person name="Ellwood M."/>
            <person name="Woodmansey R."/>
            <person name="Clark G."/>
            <person name="Cooper J."/>
            <person name="Tromans A."/>
            <person name="Grafham D."/>
            <person name="Skuce C."/>
            <person name="Pandian R."/>
            <person name="Andrews R."/>
            <person name="Harrison E."/>
            <person name="Kimberley A."/>
            <person name="Garnett J."/>
            <person name="Fosker N."/>
            <person name="Hall R."/>
            <person name="Garner P."/>
            <person name="Kelly D."/>
            <person name="Bird C."/>
            <person name="Palmer S."/>
            <person name="Gehring I."/>
            <person name="Berger A."/>
            <person name="Dooley C.M."/>
            <person name="Ersan-Urun Z."/>
            <person name="Eser C."/>
            <person name="Geiger H."/>
            <person name="Geisler M."/>
            <person name="Karotki L."/>
            <person name="Kirn A."/>
            <person name="Konantz J."/>
            <person name="Konantz M."/>
            <person name="Oberlander M."/>
            <person name="Rudolph-Geiger S."/>
            <person name="Teucke M."/>
            <person name="Lanz C."/>
            <person name="Raddatz G."/>
            <person name="Osoegawa K."/>
            <person name="Zhu B."/>
            <person name="Rapp A."/>
            <person name="Widaa S."/>
            <person name="Langford C."/>
            <person name="Yang F."/>
            <person name="Schuster S.C."/>
            <person name="Carter N.P."/>
            <person name="Harrow J."/>
            <person name="Ning Z."/>
            <person name="Herrero J."/>
            <person name="Searle S.M."/>
            <person name="Enright A."/>
            <person name="Geisler R."/>
            <person name="Plasterk R.H."/>
            <person name="Lee C."/>
            <person name="Westerfield M."/>
            <person name="de Jong P.J."/>
            <person name="Zon L.I."/>
            <person name="Postlethwait J.H."/>
            <person name="Nusslein-Volhard C."/>
            <person name="Hubbard T.J."/>
            <person name="Roest Crollius H."/>
            <person name="Rogers J."/>
            <person name="Stemple D.L."/>
        </authorList>
    </citation>
    <scope>NUCLEOTIDE SEQUENCE [LARGE SCALE GENOMIC DNA]</scope>
    <source>
        <strain>Tuebingen</strain>
    </source>
</reference>
<reference key="3">
    <citation type="submission" date="2006-04" db="EMBL/GenBank/DDBJ databases">
        <authorList>
            <consortium name="NIH - Zebrafish Gene Collection (ZGC) project"/>
        </authorList>
    </citation>
    <scope>NUCLEOTIDE SEQUENCE [LARGE SCALE MRNA]</scope>
    <source>
        <tissue>Embryo</tissue>
        <tissue>Ovary</tissue>
    </source>
</reference>
<reference evidence="7 8" key="4">
    <citation type="journal article" date="2012" name="Nat. Struct. Mol. Biol.">
        <title>Structural basis for recognition of 5'-phosphotyrosine adducts by Tdp2.</title>
        <authorList>
            <person name="Shi K."/>
            <person name="Kurahashi K."/>
            <person name="Gao R."/>
            <person name="Tsutakawa S.E."/>
            <person name="Tainer J.A."/>
            <person name="Pommier Y."/>
            <person name="Aihara H."/>
        </authorList>
    </citation>
    <scope>X-RAY CRYSTALLOGRAPHY (1.66 ANGSTROMS) OF 120-369 IN COMPLEX WITH MAGNESIUM AND DNA</scope>
    <scope>COFACTOR</scope>
</reference>
<reference evidence="9" key="5">
    <citation type="journal article" date="2018" name="Eur. J. Pharm. Sci.">
        <title>New fluorescence-based high-throughput screening assay for small molecule inhibitors of tyrosyl-DNA phosphodiesterase 2 (TDP2).</title>
        <authorList>
            <person name="Ribeiro C.J.A."/>
            <person name="Kankanala J."/>
            <person name="Shi K."/>
            <person name="Kurahashi K."/>
            <person name="Kiselev E."/>
            <person name="Ravji A."/>
            <person name="Pommier Y."/>
            <person name="Aihara H."/>
            <person name="Wang Z."/>
        </authorList>
    </citation>
    <scope>X-RAY CRYSTALLOGRAPHY (1.62 ANGSTROMS) OF 121-369</scope>
</reference>
<name>TYDP2_DANRE</name>
<comment type="function">
    <text evidence="2 4">DNA repair enzyme that can remove a variety of covalent adducts from DNA through hydrolysis of a 5'-phosphodiester bond, giving rise to DNA with a free 5' phosphate. Catalyzes the hydrolysis of dead-end complexes between DNA and the topoisomerase 2 (top2) active site tyrosine residue. Hydrolyzes 5'-phosphoglycolates on protruding 5' ends on DNA double-strand breaks (DSBs) due to DNA damage by radiation and free radicals (By similarity). Controls gastrulation movements and left/right (L/R) axis determination via smad3-mediated regulation of cdh1/e-cadherin. Regulates the formation of Kupffer's vesicle, a signaling center essential for establishing L/R asymmetry. Modulates smad3 activity through modulating nodal-acvr1/akt4 signaling.</text>
</comment>
<comment type="cofactor">
    <cofactor evidence="5">
        <name>Mg(2+)</name>
        <dbReference type="ChEBI" id="CHEBI:18420"/>
    </cofactor>
    <cofactor evidence="2">
        <name>Mn(2+)</name>
        <dbReference type="ChEBI" id="CHEBI:29035"/>
    </cofactor>
    <text evidence="5">Binds 1 magnesium or manganese ion per subunit.</text>
</comment>
<comment type="subcellular location">
    <subcellularLocation>
        <location evidence="1">Nucleus</location>
    </subcellularLocation>
    <subcellularLocation>
        <location evidence="1">Nucleus</location>
        <location evidence="1">PML body</location>
    </subcellularLocation>
</comment>
<comment type="tissue specificity">
    <text evidence="4">Expressed ubiquitously during blastula stages and throughout gastrulation. Shortly after shield formation, expressed weakly in dorsal forerunner cells (DFCs). Between somite stages 5 and 9, expressed in the tailbud and around the Kupffer's vesicle at a higher level than the more uniform expression in the embryo.</text>
</comment>
<comment type="developmental stage">
    <text evidence="4">Expressed both maternally and zygotically.</text>
</comment>
<comment type="similarity">
    <text evidence="6">Belongs to the CCR4/nocturin family. TTRAP/TDP2 subfamily.</text>
</comment>
<comment type="sequence caution" evidence="6">
    <conflict type="erroneous initiation">
        <sequence resource="EMBL-CDS" id="AAH83404"/>
    </conflict>
</comment>
<comment type="sequence caution" evidence="6">
    <conflict type="erroneous initiation">
        <sequence resource="EMBL-CDS" id="AAH97117"/>
    </conflict>
    <text>Extended N-terminus.</text>
</comment>
<comment type="sequence caution" evidence="6">
    <conflict type="frameshift">
        <sequence resource="EMBL-CDS" id="AAH97117"/>
    </conflict>
</comment>
<comment type="sequence caution" evidence="6">
    <conflict type="erroneous gene model prediction">
        <sequence resource="EMBL-CDS" id="CAK05007"/>
    </conflict>
</comment>
<comment type="sequence caution" evidence="6">
    <conflict type="erroneous gene model prediction">
        <sequence resource="EMBL-CDS" id="CAK05424"/>
    </conflict>
</comment>
<dbReference type="EC" id="3.1.4.-" evidence="2"/>
<dbReference type="EMBL" id="DQ524846">
    <property type="protein sequence ID" value="ABF70183.1"/>
    <property type="molecule type" value="mRNA"/>
</dbReference>
<dbReference type="EMBL" id="BX511258">
    <property type="protein sequence ID" value="CAK05007.1"/>
    <property type="status" value="ALT_SEQ"/>
    <property type="molecule type" value="Genomic_DNA"/>
</dbReference>
<dbReference type="EMBL" id="BX957279">
    <property type="protein sequence ID" value="CAK05424.1"/>
    <property type="status" value="ALT_SEQ"/>
    <property type="molecule type" value="Genomic_DNA"/>
</dbReference>
<dbReference type="EMBL" id="BC083404">
    <property type="protein sequence ID" value="AAH83404.1"/>
    <property type="status" value="ALT_INIT"/>
    <property type="molecule type" value="mRNA"/>
</dbReference>
<dbReference type="EMBL" id="BC097117">
    <property type="protein sequence ID" value="AAH97117.1"/>
    <property type="status" value="ALT_SEQ"/>
    <property type="molecule type" value="mRNA"/>
</dbReference>
<dbReference type="EMBL" id="BC115076">
    <property type="protein sequence ID" value="AAI15077.1"/>
    <property type="molecule type" value="mRNA"/>
</dbReference>
<dbReference type="RefSeq" id="NP_001073171.1">
    <property type="nucleotide sequence ID" value="NM_001079703.1"/>
</dbReference>
<dbReference type="PDB" id="4F1H">
    <property type="method" value="X-ray"/>
    <property type="resolution" value="1.66 A"/>
    <property type="chains" value="A=120-369, B=119-369"/>
</dbReference>
<dbReference type="PDB" id="4FPV">
    <property type="method" value="X-ray"/>
    <property type="resolution" value="1.73 A"/>
    <property type="chains" value="A/B=113-369"/>
</dbReference>
<dbReference type="PDB" id="6CA4">
    <property type="method" value="X-ray"/>
    <property type="resolution" value="1.62 A"/>
    <property type="chains" value="A/B/C=121-369"/>
</dbReference>
<dbReference type="PDBsum" id="4F1H"/>
<dbReference type="PDBsum" id="4FPV"/>
<dbReference type="PDBsum" id="6CA4"/>
<dbReference type="SMR" id="Q5XJA0"/>
<dbReference type="FunCoup" id="Q5XJA0">
    <property type="interactions" value="434"/>
</dbReference>
<dbReference type="STRING" id="7955.ENSDARP00000094388"/>
<dbReference type="BindingDB" id="Q5XJA0"/>
<dbReference type="ChEMBL" id="CHEMBL3813589"/>
<dbReference type="PaxDb" id="7955-ENSDARP00000094388"/>
<dbReference type="GeneID" id="553516"/>
<dbReference type="KEGG" id="dre:553516"/>
<dbReference type="AGR" id="ZFIN:ZDB-GENE-050816-1"/>
<dbReference type="CTD" id="553516"/>
<dbReference type="ZFIN" id="ZDB-GENE-050816-1">
    <property type="gene designation" value="tdp2b"/>
</dbReference>
<dbReference type="eggNOG" id="KOG2756">
    <property type="taxonomic scope" value="Eukaryota"/>
</dbReference>
<dbReference type="InParanoid" id="Q5XJA0"/>
<dbReference type="OrthoDB" id="9975959at2759"/>
<dbReference type="PhylomeDB" id="Q5XJA0"/>
<dbReference type="TreeFam" id="TF314813"/>
<dbReference type="EvolutionaryTrace" id="Q5XJA0"/>
<dbReference type="PRO" id="PR:Q5XJA0"/>
<dbReference type="Proteomes" id="UP000000437">
    <property type="component" value="Alternate scaffold 19"/>
</dbReference>
<dbReference type="Proteomes" id="UP000000437">
    <property type="component" value="Chromosome 19"/>
</dbReference>
<dbReference type="GO" id="GO:0005737">
    <property type="term" value="C:cytoplasm"/>
    <property type="evidence" value="ECO:0000318"/>
    <property type="project" value="GO_Central"/>
</dbReference>
<dbReference type="GO" id="GO:0016605">
    <property type="term" value="C:PML body"/>
    <property type="evidence" value="ECO:0000250"/>
    <property type="project" value="UniProtKB"/>
</dbReference>
<dbReference type="GO" id="GO:0070260">
    <property type="term" value="F:5'-tyrosyl-DNA phosphodiesterase activity"/>
    <property type="evidence" value="ECO:0000250"/>
    <property type="project" value="UniProtKB"/>
</dbReference>
<dbReference type="GO" id="GO:0003677">
    <property type="term" value="F:DNA binding"/>
    <property type="evidence" value="ECO:0000314"/>
    <property type="project" value="ZFIN"/>
</dbReference>
<dbReference type="GO" id="GO:0000287">
    <property type="term" value="F:magnesium ion binding"/>
    <property type="evidence" value="ECO:0000250"/>
    <property type="project" value="UniProtKB"/>
</dbReference>
<dbReference type="GO" id="GO:0030145">
    <property type="term" value="F:manganese ion binding"/>
    <property type="evidence" value="ECO:0000250"/>
    <property type="project" value="UniProtKB"/>
</dbReference>
<dbReference type="GO" id="GO:0004518">
    <property type="term" value="F:nuclease activity"/>
    <property type="evidence" value="ECO:0007669"/>
    <property type="project" value="UniProtKB-KW"/>
</dbReference>
<dbReference type="GO" id="GO:0003697">
    <property type="term" value="F:single-stranded DNA binding"/>
    <property type="evidence" value="ECO:0000250"/>
    <property type="project" value="UniProtKB"/>
</dbReference>
<dbReference type="GO" id="GO:0070259">
    <property type="term" value="F:tyrosyl-DNA phosphodiesterase activity"/>
    <property type="evidence" value="ECO:0000314"/>
    <property type="project" value="ZFIN"/>
</dbReference>
<dbReference type="GO" id="GO:0060027">
    <property type="term" value="P:convergent extension involved in gastrulation"/>
    <property type="evidence" value="ECO:0000315"/>
    <property type="project" value="ZFIN"/>
</dbReference>
<dbReference type="GO" id="GO:0007368">
    <property type="term" value="P:determination of left/right symmetry"/>
    <property type="evidence" value="ECO:0000315"/>
    <property type="project" value="UniProtKB"/>
</dbReference>
<dbReference type="GO" id="GO:0006302">
    <property type="term" value="P:double-strand break repair"/>
    <property type="evidence" value="ECO:0000250"/>
    <property type="project" value="UniProtKB"/>
</dbReference>
<dbReference type="GO" id="GO:0007369">
    <property type="term" value="P:gastrulation"/>
    <property type="evidence" value="ECO:0000315"/>
    <property type="project" value="UniProtKB"/>
</dbReference>
<dbReference type="GO" id="GO:0030512">
    <property type="term" value="P:negative regulation of transforming growth factor beta receptor signaling pathway"/>
    <property type="evidence" value="ECO:0000315"/>
    <property type="project" value="ZFIN"/>
</dbReference>
<dbReference type="CDD" id="cd09080">
    <property type="entry name" value="TDP2"/>
    <property type="match status" value="1"/>
</dbReference>
<dbReference type="CDD" id="cd14344">
    <property type="entry name" value="UBA_TYDP2"/>
    <property type="match status" value="1"/>
</dbReference>
<dbReference type="FunFam" id="1.10.8.10:FF:000142">
    <property type="entry name" value="Tyrosyl-DNA phosphodiesterase 2"/>
    <property type="match status" value="1"/>
</dbReference>
<dbReference type="FunFam" id="3.60.10.10:FF:000024">
    <property type="entry name" value="Tyrosyl-DNA phosphodiesterase 2"/>
    <property type="match status" value="1"/>
</dbReference>
<dbReference type="Gene3D" id="1.10.8.10">
    <property type="entry name" value="DNA helicase RuvA subunit, C-terminal domain"/>
    <property type="match status" value="1"/>
</dbReference>
<dbReference type="Gene3D" id="3.60.10.10">
    <property type="entry name" value="Endonuclease/exonuclease/phosphatase"/>
    <property type="match status" value="1"/>
</dbReference>
<dbReference type="InterPro" id="IPR036691">
    <property type="entry name" value="Endo/exonu/phosph_ase_sf"/>
</dbReference>
<dbReference type="InterPro" id="IPR005135">
    <property type="entry name" value="Endo/exonuclease/phosphatase"/>
</dbReference>
<dbReference type="InterPro" id="IPR051547">
    <property type="entry name" value="TDP2-like"/>
</dbReference>
<dbReference type="InterPro" id="IPR009060">
    <property type="entry name" value="UBA-like_sf"/>
</dbReference>
<dbReference type="PANTHER" id="PTHR15822">
    <property type="entry name" value="TRAF AND TNF RECEPTOR-ASSOCIATED PROTEIN"/>
    <property type="match status" value="1"/>
</dbReference>
<dbReference type="PANTHER" id="PTHR15822:SF4">
    <property type="entry name" value="TYROSYL-DNA PHOSPHODIESTERASE 2"/>
    <property type="match status" value="1"/>
</dbReference>
<dbReference type="Pfam" id="PF03372">
    <property type="entry name" value="Exo_endo_phos"/>
    <property type="match status" value="1"/>
</dbReference>
<dbReference type="Pfam" id="PF14555">
    <property type="entry name" value="UBA_4"/>
    <property type="match status" value="1"/>
</dbReference>
<dbReference type="SUPFAM" id="SSF56219">
    <property type="entry name" value="DNase I-like"/>
    <property type="match status" value="1"/>
</dbReference>
<dbReference type="SUPFAM" id="SSF46934">
    <property type="entry name" value="UBA-like"/>
    <property type="match status" value="1"/>
</dbReference>
<feature type="chain" id="PRO_0000065677" description="Tyrosyl-DNA phosphodiesterase 2">
    <location>
        <begin position="1"/>
        <end position="369"/>
    </location>
</feature>
<feature type="region of interest" description="Disordered" evidence="3">
    <location>
        <begin position="58"/>
        <end position="77"/>
    </location>
</feature>
<feature type="region of interest" description="Interaction with 5' end of substrate DNA" evidence="2">
    <location>
        <begin position="129"/>
        <end position="133"/>
    </location>
</feature>
<feature type="region of interest" description="Interaction with 5' end of substrate DNA" evidence="5">
    <location>
        <begin position="235"/>
        <end position="240"/>
    </location>
</feature>
<feature type="region of interest" description="Interaction with 5' end of substrate DNA" evidence="5">
    <location>
        <begin position="273"/>
        <end position="275"/>
    </location>
</feature>
<feature type="compositionally biased region" description="Basic and acidic residues" evidence="3">
    <location>
        <begin position="59"/>
        <end position="71"/>
    </location>
</feature>
<feature type="active site" description="Proton donor/acceptor" evidence="1">
    <location>
        <position position="271"/>
    </location>
</feature>
<feature type="binding site" evidence="2">
    <location>
        <position position="131"/>
    </location>
    <ligand>
        <name>Mg(2+)</name>
        <dbReference type="ChEBI" id="CHEBI:18420"/>
    </ligand>
</feature>
<feature type="binding site" evidence="5 8">
    <location>
        <position position="161"/>
    </location>
    <ligand>
        <name>Mg(2+)</name>
        <dbReference type="ChEBI" id="CHEBI:18420"/>
    </ligand>
</feature>
<feature type="site" description="Interaction with 5' end of substrate DNA" evidence="2">
    <location>
        <position position="187"/>
    </location>
</feature>
<feature type="site" description="Interaction with 5' end of substrate DNA" evidence="2">
    <location>
        <position position="306"/>
    </location>
</feature>
<feature type="site" description="Interaction with 5' end of substrate DNA" evidence="2">
    <location>
        <position position="324"/>
    </location>
</feature>
<feature type="site" description="Interaction with 5' end of substrate DNA" evidence="5">
    <location>
        <position position="360"/>
    </location>
</feature>
<feature type="sequence conflict" description="In Ref. 1; ABF70183, 2; CAK05007 and 3; AAH83404." evidence="6" ref="1 2 3">
    <original>G</original>
    <variation>E</variation>
    <location>
        <position position="5"/>
    </location>
</feature>
<feature type="sequence conflict" description="In Ref. 2; CAK05007." evidence="6" ref="2">
    <original>D</original>
    <variation>DVNSS</variation>
    <location>
        <position position="69"/>
    </location>
</feature>
<feature type="sequence conflict" description="In Ref. 2; CAK05007." evidence="6" ref="2">
    <original>D</original>
    <variation>E</variation>
    <location>
        <position position="140"/>
    </location>
</feature>
<feature type="sequence conflict" description="In Ref. 1; ABF70183." evidence="6" ref="1">
    <original>S</original>
    <variation>F</variation>
    <location>
        <position position="331"/>
    </location>
</feature>
<feature type="sequence conflict" description="In Ref. 3; AAH83404." evidence="6" ref="3">
    <original>A</original>
    <variation>G</variation>
    <location>
        <position position="335"/>
    </location>
</feature>
<feature type="sequence conflict" description="In Ref. 1; ABF70183 and 2; CAK05007." evidence="6" ref="1 2">
    <original>A</original>
    <variation>R</variation>
    <location>
        <position position="335"/>
    </location>
</feature>
<feature type="sequence conflict" description="In Ref. 1; ABF70183 and 2; CAK05007." evidence="6" ref="1 2">
    <original>P</original>
    <variation>A</variation>
    <location>
        <position position="337"/>
    </location>
</feature>
<feature type="sequence conflict" description="In Ref. 3; AAH97117." evidence="6" ref="3">
    <original>M</original>
    <variation>K</variation>
    <location>
        <position position="343"/>
    </location>
</feature>
<feature type="helix" evidence="10">
    <location>
        <begin position="115"/>
        <end position="119"/>
    </location>
</feature>
<feature type="strand" evidence="11">
    <location>
        <begin position="123"/>
        <end position="129"/>
    </location>
</feature>
<feature type="helix" evidence="11">
    <location>
        <begin position="138"/>
        <end position="152"/>
    </location>
</feature>
<feature type="strand" evidence="11">
    <location>
        <begin position="155"/>
        <end position="162"/>
    </location>
</feature>
<feature type="helix" evidence="11">
    <location>
        <begin position="164"/>
        <end position="173"/>
    </location>
</feature>
<feature type="strand" evidence="11">
    <location>
        <begin position="177"/>
        <end position="182"/>
    </location>
</feature>
<feature type="strand" evidence="11">
    <location>
        <begin position="184"/>
        <end position="194"/>
    </location>
</feature>
<feature type="turn" evidence="11">
    <location>
        <begin position="195"/>
        <end position="197"/>
    </location>
</feature>
<feature type="strand" evidence="11">
    <location>
        <begin position="199"/>
        <end position="207"/>
    </location>
</feature>
<feature type="strand" evidence="11">
    <location>
        <begin position="216"/>
        <end position="224"/>
    </location>
</feature>
<feature type="strand" evidence="11">
    <location>
        <begin position="227"/>
        <end position="233"/>
    </location>
</feature>
<feature type="helix" evidence="11">
    <location>
        <begin position="240"/>
        <end position="242"/>
    </location>
</feature>
<feature type="helix" evidence="11">
    <location>
        <begin position="243"/>
        <end position="259"/>
    </location>
</feature>
<feature type="strand" evidence="11">
    <location>
        <begin position="264"/>
        <end position="271"/>
    </location>
</feature>
<feature type="helix" evidence="11">
    <location>
        <begin position="278"/>
        <end position="281"/>
    </location>
</feature>
<feature type="strand" evidence="11">
    <location>
        <begin position="289"/>
        <end position="291"/>
    </location>
</feature>
<feature type="helix" evidence="11">
    <location>
        <begin position="292"/>
        <end position="295"/>
    </location>
</feature>
<feature type="helix" evidence="11">
    <location>
        <begin position="300"/>
        <end position="302"/>
    </location>
</feature>
<feature type="strand" evidence="11">
    <location>
        <begin position="305"/>
        <end position="307"/>
    </location>
</feature>
<feature type="turn" evidence="11">
    <location>
        <begin position="308"/>
        <end position="310"/>
    </location>
</feature>
<feature type="strand" evidence="11">
    <location>
        <begin position="325"/>
        <end position="330"/>
    </location>
</feature>
<feature type="strand" evidence="11">
    <location>
        <begin position="339"/>
        <end position="346"/>
    </location>
</feature>
<feature type="strand" evidence="11">
    <location>
        <begin position="362"/>
        <end position="368"/>
    </location>
</feature>
<sequence length="369" mass="41504">MSALGESRTRLCDQFAFVSGSDSAVAQCYLAENEWDMERALNSFFEAHMDSVFDEEAEKTEVTGNKRKDDTAEASGTKKKLKTDNADCIDLTAEEPTCSITVNSKENQAENGTAKSEVEDSKLSIISWNVDGLDTLNLADRARGLCSYLALYTPDVVFLQELIPAYVQYLKKRAVSYLFFEGSDDGYFTGIMLRKSRVKFLESEIICFPTTQMMRNLLIAQVTFSGQKLYLMTSHLESCKNQSQERTKQLRVVLQKIKEAPEDAIVIFAGDTNLRDAEVANVGGLPAGVCDVWEQLGKQEHCRYTWDTKANSNKTVPYVSRCRFDRIFLRSAKTAPPVTPDHMALIGMEKLDCGRYTSDHWGIYCTFNT</sequence>
<keyword id="KW-0002">3D-structure</keyword>
<keyword id="KW-0217">Developmental protein</keyword>
<keyword id="KW-0227">DNA damage</keyword>
<keyword id="KW-0234">DNA repair</keyword>
<keyword id="KW-0378">Hydrolase</keyword>
<keyword id="KW-0460">Magnesium</keyword>
<keyword id="KW-0479">Metal-binding</keyword>
<keyword id="KW-0540">Nuclease</keyword>
<keyword id="KW-0539">Nucleus</keyword>
<keyword id="KW-1185">Reference proteome</keyword>
<proteinExistence type="evidence at protein level"/>
<organism>
    <name type="scientific">Danio rerio</name>
    <name type="common">Zebrafish</name>
    <name type="synonym">Brachydanio rerio</name>
    <dbReference type="NCBI Taxonomy" id="7955"/>
    <lineage>
        <taxon>Eukaryota</taxon>
        <taxon>Metazoa</taxon>
        <taxon>Chordata</taxon>
        <taxon>Craniata</taxon>
        <taxon>Vertebrata</taxon>
        <taxon>Euteleostomi</taxon>
        <taxon>Actinopterygii</taxon>
        <taxon>Neopterygii</taxon>
        <taxon>Teleostei</taxon>
        <taxon>Ostariophysi</taxon>
        <taxon>Cypriniformes</taxon>
        <taxon>Danionidae</taxon>
        <taxon>Danioninae</taxon>
        <taxon>Danio</taxon>
    </lineage>
</organism>
<protein>
    <recommendedName>
        <fullName>Tyrosyl-DNA phosphodiesterase 2</fullName>
        <shortName>Tyr-DNA phosphodiesterase 2</shortName>
        <ecNumber evidence="2">3.1.4.-</ecNumber>
    </recommendedName>
    <alternativeName>
        <fullName>5'-tyrosyl-DNA phosphodiesterase</fullName>
        <shortName>5'-Tyr-DNA phosphodiesterase</shortName>
    </alternativeName>
    <alternativeName>
        <fullName>TRAF and TNF receptor-associated protein homolog</fullName>
    </alternativeName>
</protein>
<evidence type="ECO:0000250" key="1">
    <source>
        <dbReference type="UniProtKB" id="O95551"/>
    </source>
</evidence>
<evidence type="ECO:0000250" key="2">
    <source>
        <dbReference type="UniProtKB" id="Q9JJX7"/>
    </source>
</evidence>
<evidence type="ECO:0000256" key="3">
    <source>
        <dbReference type="SAM" id="MobiDB-lite"/>
    </source>
</evidence>
<evidence type="ECO:0000269" key="4">
    <source>
    </source>
</evidence>
<evidence type="ECO:0000269" key="5">
    <source>
    </source>
</evidence>
<evidence type="ECO:0000305" key="6"/>
<evidence type="ECO:0007744" key="7">
    <source>
        <dbReference type="PDB" id="4F1H"/>
    </source>
</evidence>
<evidence type="ECO:0007744" key="8">
    <source>
        <dbReference type="PDB" id="4FPV"/>
    </source>
</evidence>
<evidence type="ECO:0007744" key="9">
    <source>
        <dbReference type="PDB" id="6CA4"/>
    </source>
</evidence>
<evidence type="ECO:0007829" key="10">
    <source>
        <dbReference type="PDB" id="4FPV"/>
    </source>
</evidence>
<evidence type="ECO:0007829" key="11">
    <source>
        <dbReference type="PDB" id="6CA4"/>
    </source>
</evidence>
<gene>
    <name type="primary">tdp2</name>
    <name type="synonym">ttrap</name>
    <name type="synonym">ttrapl</name>
    <name type="ORF">si:ch211-81e5.5</name>
    <name type="ORF">si:dkey-218n20.5</name>
</gene>